<name>ATPD_PSEPW</name>
<reference key="1">
    <citation type="submission" date="2008-02" db="EMBL/GenBank/DDBJ databases">
        <title>Complete sequence of Pseudomonas putida W619.</title>
        <authorList>
            <person name="Copeland A."/>
            <person name="Lucas S."/>
            <person name="Lapidus A."/>
            <person name="Barry K."/>
            <person name="Detter J.C."/>
            <person name="Glavina del Rio T."/>
            <person name="Dalin E."/>
            <person name="Tice H."/>
            <person name="Pitluck S."/>
            <person name="Chain P."/>
            <person name="Malfatti S."/>
            <person name="Shin M."/>
            <person name="Vergez L."/>
            <person name="Schmutz J."/>
            <person name="Larimer F."/>
            <person name="Land M."/>
            <person name="Hauser L."/>
            <person name="Kyrpides N."/>
            <person name="Kim E."/>
            <person name="Taghavi S."/>
            <person name="Vangronsveld D."/>
            <person name="van der Lelie D."/>
            <person name="Richardson P."/>
        </authorList>
    </citation>
    <scope>NUCLEOTIDE SEQUENCE [LARGE SCALE GENOMIC DNA]</scope>
    <source>
        <strain>W619</strain>
    </source>
</reference>
<comment type="function">
    <text evidence="1">F(1)F(0) ATP synthase produces ATP from ADP in the presence of a proton or sodium gradient. F-type ATPases consist of two structural domains, F(1) containing the extramembraneous catalytic core and F(0) containing the membrane proton channel, linked together by a central stalk and a peripheral stalk. During catalysis, ATP synthesis in the catalytic domain of F(1) is coupled via a rotary mechanism of the central stalk subunits to proton translocation.</text>
</comment>
<comment type="function">
    <text evidence="1">This protein is part of the stalk that links CF(0) to CF(1). It either transmits conformational changes from CF(0) to CF(1) or is implicated in proton conduction.</text>
</comment>
<comment type="subunit">
    <text evidence="1">F-type ATPases have 2 components, F(1) - the catalytic core - and F(0) - the membrane proton channel. F(1) has five subunits: alpha(3), beta(3), gamma(1), delta(1), epsilon(1). F(0) has three main subunits: a(1), b(2) and c(10-14). The alpha and beta chains form an alternating ring which encloses part of the gamma chain. F(1) is attached to F(0) by a central stalk formed by the gamma and epsilon chains, while a peripheral stalk is formed by the delta and b chains.</text>
</comment>
<comment type="subcellular location">
    <subcellularLocation>
        <location evidence="1">Cell inner membrane</location>
        <topology evidence="1">Peripheral membrane protein</topology>
    </subcellularLocation>
</comment>
<comment type="similarity">
    <text evidence="1">Belongs to the ATPase delta chain family.</text>
</comment>
<keyword id="KW-0066">ATP synthesis</keyword>
<keyword id="KW-0997">Cell inner membrane</keyword>
<keyword id="KW-1003">Cell membrane</keyword>
<keyword id="KW-0139">CF(1)</keyword>
<keyword id="KW-0375">Hydrogen ion transport</keyword>
<keyword id="KW-0406">Ion transport</keyword>
<keyword id="KW-0472">Membrane</keyword>
<keyword id="KW-0813">Transport</keyword>
<proteinExistence type="inferred from homology"/>
<protein>
    <recommendedName>
        <fullName evidence="1">ATP synthase subunit delta</fullName>
    </recommendedName>
    <alternativeName>
        <fullName evidence="1">ATP synthase F(1) sector subunit delta</fullName>
    </alternativeName>
    <alternativeName>
        <fullName evidence="1">F-type ATPase subunit delta</fullName>
        <shortName evidence="1">F-ATPase subunit delta</shortName>
    </alternativeName>
</protein>
<feature type="chain" id="PRO_0000371077" description="ATP synthase subunit delta">
    <location>
        <begin position="1"/>
        <end position="178"/>
    </location>
</feature>
<organism>
    <name type="scientific">Pseudomonas putida (strain W619)</name>
    <dbReference type="NCBI Taxonomy" id="390235"/>
    <lineage>
        <taxon>Bacteria</taxon>
        <taxon>Pseudomonadati</taxon>
        <taxon>Pseudomonadota</taxon>
        <taxon>Gammaproteobacteria</taxon>
        <taxon>Pseudomonadales</taxon>
        <taxon>Pseudomonadaceae</taxon>
        <taxon>Pseudomonas</taxon>
    </lineage>
</organism>
<sequence length="178" mass="19243">MAELTTLARPYAKAAFEHAQAHQQLANWSAMLGLAAAVSQDDTMQRLLKAPRLTSAEKAATFIDVCGDKFNAQAQNFIRVAAENDRLLLLPEIAALFDLYKAEQEKSVDVEVTSAFALNQEQQDKLAKVLSARLGQEVRLHASEDANLIGGVVIRAGDLVIDGSVRGKIAKLAEALKS</sequence>
<dbReference type="EMBL" id="CP000949">
    <property type="protein sequence ID" value="ACA75678.1"/>
    <property type="molecule type" value="Genomic_DNA"/>
</dbReference>
<dbReference type="SMR" id="B1JFU4"/>
<dbReference type="STRING" id="390235.PputW619_5203"/>
<dbReference type="KEGG" id="ppw:PputW619_5203"/>
<dbReference type="eggNOG" id="COG0712">
    <property type="taxonomic scope" value="Bacteria"/>
</dbReference>
<dbReference type="HOGENOM" id="CLU_085114_3_0_6"/>
<dbReference type="OrthoDB" id="9816221at2"/>
<dbReference type="GO" id="GO:0005886">
    <property type="term" value="C:plasma membrane"/>
    <property type="evidence" value="ECO:0007669"/>
    <property type="project" value="UniProtKB-SubCell"/>
</dbReference>
<dbReference type="GO" id="GO:0045259">
    <property type="term" value="C:proton-transporting ATP synthase complex"/>
    <property type="evidence" value="ECO:0007669"/>
    <property type="project" value="UniProtKB-KW"/>
</dbReference>
<dbReference type="GO" id="GO:0046933">
    <property type="term" value="F:proton-transporting ATP synthase activity, rotational mechanism"/>
    <property type="evidence" value="ECO:0007669"/>
    <property type="project" value="UniProtKB-UniRule"/>
</dbReference>
<dbReference type="Gene3D" id="1.10.520.20">
    <property type="entry name" value="N-terminal domain of the delta subunit of the F1F0-ATP synthase"/>
    <property type="match status" value="1"/>
</dbReference>
<dbReference type="HAMAP" id="MF_01416">
    <property type="entry name" value="ATP_synth_delta_bact"/>
    <property type="match status" value="1"/>
</dbReference>
<dbReference type="InterPro" id="IPR026015">
    <property type="entry name" value="ATP_synth_OSCP/delta_N_sf"/>
</dbReference>
<dbReference type="InterPro" id="IPR000711">
    <property type="entry name" value="ATPase_OSCP/dsu"/>
</dbReference>
<dbReference type="NCBIfam" id="TIGR01145">
    <property type="entry name" value="ATP_synt_delta"/>
    <property type="match status" value="1"/>
</dbReference>
<dbReference type="NCBIfam" id="NF004402">
    <property type="entry name" value="PRK05758.2-2"/>
    <property type="match status" value="1"/>
</dbReference>
<dbReference type="PANTHER" id="PTHR11910">
    <property type="entry name" value="ATP SYNTHASE DELTA CHAIN"/>
    <property type="match status" value="1"/>
</dbReference>
<dbReference type="Pfam" id="PF00213">
    <property type="entry name" value="OSCP"/>
    <property type="match status" value="1"/>
</dbReference>
<dbReference type="PRINTS" id="PR00125">
    <property type="entry name" value="ATPASEDELTA"/>
</dbReference>
<dbReference type="SUPFAM" id="SSF47928">
    <property type="entry name" value="N-terminal domain of the delta subunit of the F1F0-ATP synthase"/>
    <property type="match status" value="1"/>
</dbReference>
<evidence type="ECO:0000255" key="1">
    <source>
        <dbReference type="HAMAP-Rule" id="MF_01416"/>
    </source>
</evidence>
<gene>
    <name evidence="1" type="primary">atpH</name>
    <name type="ordered locus">PputW619_5203</name>
</gene>
<accession>B1JFU4</accession>